<reference key="1">
    <citation type="journal article" date="2005" name="Nature">
        <title>The genome of the social amoeba Dictyostelium discoideum.</title>
        <authorList>
            <person name="Eichinger L."/>
            <person name="Pachebat J.A."/>
            <person name="Gloeckner G."/>
            <person name="Rajandream M.A."/>
            <person name="Sucgang R."/>
            <person name="Berriman M."/>
            <person name="Song J."/>
            <person name="Olsen R."/>
            <person name="Szafranski K."/>
            <person name="Xu Q."/>
            <person name="Tunggal B."/>
            <person name="Kummerfeld S."/>
            <person name="Madera M."/>
            <person name="Konfortov B.A."/>
            <person name="Rivero F."/>
            <person name="Bankier A.T."/>
            <person name="Lehmann R."/>
            <person name="Hamlin N."/>
            <person name="Davies R."/>
            <person name="Gaudet P."/>
            <person name="Fey P."/>
            <person name="Pilcher K."/>
            <person name="Chen G."/>
            <person name="Saunders D."/>
            <person name="Sodergren E.J."/>
            <person name="Davis P."/>
            <person name="Kerhornou A."/>
            <person name="Nie X."/>
            <person name="Hall N."/>
            <person name="Anjard C."/>
            <person name="Hemphill L."/>
            <person name="Bason N."/>
            <person name="Farbrother P."/>
            <person name="Desany B."/>
            <person name="Just E."/>
            <person name="Morio T."/>
            <person name="Rost R."/>
            <person name="Churcher C.M."/>
            <person name="Cooper J."/>
            <person name="Haydock S."/>
            <person name="van Driessche N."/>
            <person name="Cronin A."/>
            <person name="Goodhead I."/>
            <person name="Muzny D.M."/>
            <person name="Mourier T."/>
            <person name="Pain A."/>
            <person name="Lu M."/>
            <person name="Harper D."/>
            <person name="Lindsay R."/>
            <person name="Hauser H."/>
            <person name="James K.D."/>
            <person name="Quiles M."/>
            <person name="Madan Babu M."/>
            <person name="Saito T."/>
            <person name="Buchrieser C."/>
            <person name="Wardroper A."/>
            <person name="Felder M."/>
            <person name="Thangavelu M."/>
            <person name="Johnson D."/>
            <person name="Knights A."/>
            <person name="Loulseged H."/>
            <person name="Mungall K.L."/>
            <person name="Oliver K."/>
            <person name="Price C."/>
            <person name="Quail M.A."/>
            <person name="Urushihara H."/>
            <person name="Hernandez J."/>
            <person name="Rabbinowitsch E."/>
            <person name="Steffen D."/>
            <person name="Sanders M."/>
            <person name="Ma J."/>
            <person name="Kohara Y."/>
            <person name="Sharp S."/>
            <person name="Simmonds M.N."/>
            <person name="Spiegler S."/>
            <person name="Tivey A."/>
            <person name="Sugano S."/>
            <person name="White B."/>
            <person name="Walker D."/>
            <person name="Woodward J.R."/>
            <person name="Winckler T."/>
            <person name="Tanaka Y."/>
            <person name="Shaulsky G."/>
            <person name="Schleicher M."/>
            <person name="Weinstock G.M."/>
            <person name="Rosenthal A."/>
            <person name="Cox E.C."/>
            <person name="Chisholm R.L."/>
            <person name="Gibbs R.A."/>
            <person name="Loomis W.F."/>
            <person name="Platzer M."/>
            <person name="Kay R.R."/>
            <person name="Williams J.G."/>
            <person name="Dear P.H."/>
            <person name="Noegel A.A."/>
            <person name="Barrell B.G."/>
            <person name="Kuspa A."/>
        </authorList>
    </citation>
    <scope>NUCLEOTIDE SEQUENCE [LARGE SCALE GENOMIC DNA]</scope>
    <source>
        <strain>AX4</strain>
    </source>
</reference>
<reference key="2">
    <citation type="book" date="2001" name="Histidine kinases in signal transduction">
        <title>The histidine kinases of Dictyostelium.</title>
        <editorList>
            <person name="Inouye M."/>
            <person name="Dutta R."/>
        </editorList>
        <authorList>
            <person name="Anjard C."/>
            <person name="Loomis W.F."/>
        </authorList>
    </citation>
    <scope>NUCLEOTIDE SEQUENCE [GENOMIC DNA] OF 1071-2388</scope>
    <source>
        <strain>AX4</strain>
    </source>
</reference>
<gene>
    <name type="primary">dhkM</name>
    <name type="ORF">DDB_G0282377</name>
</gene>
<protein>
    <recommendedName>
        <fullName>Hybrid signal transduction histidine kinase M</fullName>
        <ecNumber>2.7.13.3</ecNumber>
    </recommendedName>
</protein>
<proteinExistence type="inferred from homology"/>
<accession>Q54SK5</accession>
<accession>Q95PH4</accession>
<feature type="chain" id="PRO_0000328370" description="Hybrid signal transduction histidine kinase M">
    <location>
        <begin position="1"/>
        <end position="2388"/>
    </location>
</feature>
<feature type="transmembrane region" description="Helical" evidence="2">
    <location>
        <begin position="550"/>
        <end position="570"/>
    </location>
</feature>
<feature type="transmembrane region" description="Helical" evidence="2">
    <location>
        <begin position="589"/>
        <end position="609"/>
    </location>
</feature>
<feature type="transmembrane region" description="Helical" evidence="2">
    <location>
        <begin position="645"/>
        <end position="665"/>
    </location>
</feature>
<feature type="transmembrane region" description="Helical" evidence="2">
    <location>
        <begin position="679"/>
        <end position="699"/>
    </location>
</feature>
<feature type="transmembrane region" description="Helical" evidence="2">
    <location>
        <begin position="896"/>
        <end position="916"/>
    </location>
</feature>
<feature type="transmembrane region" description="Helical" evidence="2">
    <location>
        <begin position="953"/>
        <end position="973"/>
    </location>
</feature>
<feature type="transmembrane region" description="Helical" evidence="2">
    <location>
        <begin position="1025"/>
        <end position="1045"/>
    </location>
</feature>
<feature type="domain" description="Histidine kinase" evidence="3">
    <location>
        <begin position="1093"/>
        <end position="1499"/>
    </location>
</feature>
<feature type="domain" description="Response regulatory 1" evidence="4">
    <location>
        <begin position="1541"/>
        <end position="1656"/>
    </location>
</feature>
<feature type="domain" description="Response regulatory 2" evidence="4">
    <location>
        <begin position="2262"/>
        <end position="2383"/>
    </location>
</feature>
<feature type="region of interest" description="Disordered" evidence="5">
    <location>
        <begin position="1"/>
        <end position="32"/>
    </location>
</feature>
<feature type="region of interest" description="Disordered" evidence="5">
    <location>
        <begin position="42"/>
        <end position="61"/>
    </location>
</feature>
<feature type="region of interest" description="Disordered" evidence="5">
    <location>
        <begin position="69"/>
        <end position="111"/>
    </location>
</feature>
<feature type="region of interest" description="Disordered" evidence="5">
    <location>
        <begin position="123"/>
        <end position="209"/>
    </location>
</feature>
<feature type="region of interest" description="Disordered" evidence="5">
    <location>
        <begin position="237"/>
        <end position="337"/>
    </location>
</feature>
<feature type="region of interest" description="Disordered" evidence="5">
    <location>
        <begin position="361"/>
        <end position="421"/>
    </location>
</feature>
<feature type="region of interest" description="Disordered" evidence="5">
    <location>
        <begin position="430"/>
        <end position="449"/>
    </location>
</feature>
<feature type="region of interest" description="Disordered" evidence="5">
    <location>
        <begin position="486"/>
        <end position="542"/>
    </location>
</feature>
<feature type="region of interest" description="Disordered" evidence="5">
    <location>
        <begin position="732"/>
        <end position="888"/>
    </location>
</feature>
<feature type="region of interest" description="Disordered" evidence="5">
    <location>
        <begin position="1236"/>
        <end position="1410"/>
    </location>
</feature>
<feature type="region of interest" description="Disordered" evidence="5">
    <location>
        <begin position="1666"/>
        <end position="1702"/>
    </location>
</feature>
<feature type="region of interest" description="Disordered" evidence="5">
    <location>
        <begin position="1960"/>
        <end position="2022"/>
    </location>
</feature>
<feature type="region of interest" description="Disordered" evidence="5">
    <location>
        <begin position="2036"/>
        <end position="2121"/>
    </location>
</feature>
<feature type="region of interest" description="Disordered" evidence="5">
    <location>
        <begin position="2133"/>
        <end position="2183"/>
    </location>
</feature>
<feature type="region of interest" description="Disordered" evidence="5">
    <location>
        <begin position="2218"/>
        <end position="2256"/>
    </location>
</feature>
<feature type="compositionally biased region" description="Polar residues" evidence="5">
    <location>
        <begin position="69"/>
        <end position="82"/>
    </location>
</feature>
<feature type="compositionally biased region" description="Low complexity" evidence="5">
    <location>
        <begin position="83"/>
        <end position="110"/>
    </location>
</feature>
<feature type="compositionally biased region" description="Low complexity" evidence="5">
    <location>
        <begin position="125"/>
        <end position="206"/>
    </location>
</feature>
<feature type="compositionally biased region" description="Low complexity" evidence="5">
    <location>
        <begin position="242"/>
        <end position="288"/>
    </location>
</feature>
<feature type="compositionally biased region" description="Polar residues" evidence="5">
    <location>
        <begin position="293"/>
        <end position="306"/>
    </location>
</feature>
<feature type="compositionally biased region" description="Basic residues" evidence="5">
    <location>
        <begin position="309"/>
        <end position="322"/>
    </location>
</feature>
<feature type="compositionally biased region" description="Low complexity" evidence="5">
    <location>
        <begin position="325"/>
        <end position="337"/>
    </location>
</feature>
<feature type="compositionally biased region" description="Low complexity" evidence="5">
    <location>
        <begin position="361"/>
        <end position="399"/>
    </location>
</feature>
<feature type="compositionally biased region" description="Low complexity" evidence="5">
    <location>
        <begin position="410"/>
        <end position="419"/>
    </location>
</feature>
<feature type="compositionally biased region" description="Low complexity" evidence="5">
    <location>
        <begin position="432"/>
        <end position="449"/>
    </location>
</feature>
<feature type="compositionally biased region" description="Pro residues" evidence="5">
    <location>
        <begin position="489"/>
        <end position="505"/>
    </location>
</feature>
<feature type="compositionally biased region" description="Low complexity" evidence="5">
    <location>
        <begin position="506"/>
        <end position="541"/>
    </location>
</feature>
<feature type="compositionally biased region" description="Basic and acidic residues" evidence="5">
    <location>
        <begin position="735"/>
        <end position="744"/>
    </location>
</feature>
<feature type="compositionally biased region" description="Low complexity" evidence="5">
    <location>
        <begin position="745"/>
        <end position="880"/>
    </location>
</feature>
<feature type="compositionally biased region" description="Basic residues" evidence="5">
    <location>
        <begin position="1236"/>
        <end position="1257"/>
    </location>
</feature>
<feature type="compositionally biased region" description="Acidic residues" evidence="5">
    <location>
        <begin position="1260"/>
        <end position="1274"/>
    </location>
</feature>
<feature type="compositionally biased region" description="Basic and acidic residues" evidence="5">
    <location>
        <begin position="1286"/>
        <end position="1315"/>
    </location>
</feature>
<feature type="compositionally biased region" description="Low complexity" evidence="5">
    <location>
        <begin position="1316"/>
        <end position="1410"/>
    </location>
</feature>
<feature type="compositionally biased region" description="Gly residues" evidence="5">
    <location>
        <begin position="1676"/>
        <end position="1696"/>
    </location>
</feature>
<feature type="compositionally biased region" description="Low complexity" evidence="5">
    <location>
        <begin position="1974"/>
        <end position="1985"/>
    </location>
</feature>
<feature type="compositionally biased region" description="Polar residues" evidence="5">
    <location>
        <begin position="1986"/>
        <end position="2010"/>
    </location>
</feature>
<feature type="compositionally biased region" description="Low complexity" evidence="5">
    <location>
        <begin position="2054"/>
        <end position="2064"/>
    </location>
</feature>
<feature type="compositionally biased region" description="Basic and acidic residues" evidence="5">
    <location>
        <begin position="2065"/>
        <end position="2076"/>
    </location>
</feature>
<feature type="compositionally biased region" description="Low complexity" evidence="5">
    <location>
        <begin position="2078"/>
        <end position="2109"/>
    </location>
</feature>
<feature type="compositionally biased region" description="Low complexity" evidence="5">
    <location>
        <begin position="2133"/>
        <end position="2165"/>
    </location>
</feature>
<feature type="compositionally biased region" description="Polar residues" evidence="5">
    <location>
        <begin position="2169"/>
        <end position="2183"/>
    </location>
</feature>
<feature type="modified residue" description="4-aspartylphosphate" evidence="4">
    <location>
        <position position="1592"/>
    </location>
</feature>
<feature type="modified residue" description="4-aspartylphosphate" evidence="4">
    <location>
        <position position="2313"/>
    </location>
</feature>
<comment type="function">
    <text evidence="1">Acts as a receptor histidine kinase for a signal transduction pathway. This protein undergoes an ATP-dependent autophosphorylation at a conserved histidine residue in the kinase core, and a phosphoryl group is then transferred to a conserved aspartate residue in the receiver domain (By similarity).</text>
</comment>
<comment type="catalytic activity">
    <reaction>
        <text>ATP + protein L-histidine = ADP + protein N-phospho-L-histidine.</text>
        <dbReference type="EC" id="2.7.13.3"/>
    </reaction>
</comment>
<comment type="subcellular location">
    <subcellularLocation>
        <location evidence="6">Membrane</location>
        <topology evidence="6">Multi-pass membrane protein</topology>
    </subcellularLocation>
</comment>
<comment type="domain">
    <text>Atypical domain architecture: contains 2 receiver domains.</text>
</comment>
<comment type="PTM">
    <text evidence="1">Activation probably requires transfer of a phosphate group between a histidine in the kinase core (transmitter) domain and an aspartate of the receiver domain.</text>
</comment>
<name>DHKM_DICDI</name>
<sequence length="2388" mass="264817">MSNYLNANSTENNNNNNNNNNNNNNNINNNFNTTDFKIVGNFNTPPIGSNNNNNNNNNSISTQSLQTINECNSGGEQSPKIKTNNNSYNTPVSSSTSTTGTNTTPMKSTPIHNSLQNIFKNANRSNLNNNNNNNNNNNNNNNNNNNNNNNNNSGCGSGSLNSVNNNNNNNNNNNNNSNNNNSNSNSNSNNNNNSNSNNNNNNSNSNAYPLKYYQHPQQSCSNLDSFENLSPLRQSSTLLNFSSNNNNNNNNNNNNNNNNSNNNSSNNNNKNNSSKNKVGGGNNKNNGGDDSAQFISSDNKYNTVGNETHHHHHHQLHNHRHSNVQGSSSPIKSSPKLISSQSLGNIFSQISPNIALTTNISPHGSPFSSSSSSRKSSSSPSFLNQNNQNNPNNQNNQNNSTSPHEKSFLNNSNDSFDYNDNSKRLRNRLTRNTGYSSTGSIGNSSSSSFYNNNNENSNIYSKIKHTRSSSGGNKPSPKYFQTSQAIYTPPYPQPYPQPPQLPPPSSSSSLSKENDNVDNNNTNNNNNNNNNNNNNNNNNNNESFFSSKGTMNLIHISLLSVLAFYIFLMVSKKFLFRVFQWNNNINSLFILIFSFHFIFSSILMFLLVVLLKMKKYSHSISQSARESLRNSRVIPSLLNFFLSDYIFLGLVLSGLVNILQVNLFFNPKDPLLNLDSISNISTAIEFLVVGIVLNFSHIPKKMYNSRYSEFRVSSSISPYFQDESYNVNNIINNDNKNKINDKSDNSNSITNNNNINNNIDNNNNSSSNTKINNDLNFDNNIKNNDINNNITNNNNNNNNNNNNNNNTNNNNNNNNNNSNNNNNNNNNNSNKNNNTNSNNNNNNSSNNNNTNNNKINDNKNNNNNNNNNNNNNNNNNNNNNNEEDDEEEKNDWSYSFQIFFTRIFLCLSITYTLIVLRLNYDPLNQFLQQSSSFGSGANGNSGGGNVNTIISPVQFQAPLATLLHFIQLVLLLVNYNRFRTNRFFSLILSTIFIEVSSWETFGLNSRLFESYIFEALLIRRWIRACSVGFPIVGIILDIYSGWMSINQSIKSIDQQNIMIVNRFNYLCSNVKKQEELTQYNSQFYIESMNQFKRLVQNTGSIISLIYDTDVQPNQEAYLSKFSSSYEQLSKLTKECLFYSEIKQLKRNDVENLSFVVSNLLEDLISTPSIRTQFEEKEIDLFYLIDKDVPLSLVGDSQKIKQILLKLITNSIKATYEGEVYIRVSLSSNLGVLKQQPIHHHRHHHRHHHHHHHHHHHHIIDDDDYDDDNDDDNNTEDSSSCCNIDELSDKIKDNQDENLELKKSNNDKIIENKENQENNNNNNNNNNNNNNNNNNNNNNSNNNTNININTNNNNDSNNNNCINNDLKNNNNNSNNNVNNNNNNINDSNNNNNSNNNNINNNINNNINNNNNIKKKKKKNEFTVYFSVIDSGSGIDPYSTNLLFQPFSLSSYNVNSTNTDGEFGLGLAICKQLSNLMNGEIKYETEMEKGSVFELQVPMKCDSISSITSSMNSTTNTTNHYPRIMNNQSSKFFANSKWGEGLKILVIDDNPNIGKVIAMHLEPFGFKVFQRTTFQSAIYFFNERNGDFNLILLDPLIPSLVIDEIKQMKQDSSNIIKNPPLVIMCTAKLRKSLNVDNVHYLYKPIKREQLTVLSQLLPNTSTINPIYSNQNLNNSGSSNGGGGGGGGGGGGGGGGGSGSSNIDFNKTKLGGSNISTGIGNSGLINSNNIPTPVNTPSNIIPNLLSCQSLLTSLNNANIPQLTNDIGITNNNINNNSLMFTTPNSTLSNNGITGLDNNSNNDTGSIDNNSNISTNIDNNNDYFIRNNGIPPQNDMNTYNNYVLNHQQGVLPKSLSVPSTPLSYNMLPTNLNINAKRSSLQPLNENSVLPTNLTPPILSASPQSLLPMGNDINSILPNTQQSQIDLQSQIELQPLLQSTIIRNDRGGDILPDSTLEGQITNLSGNNSTISINPPLPETNNNTTTTTTTTQPKKSPILTSSNGSDKSEGSTGSNRSKSRISFLNSSNSGLLKNNLGEDIYCKGDQSEGIPIPKSERTSDSSSSSSSSDSHGQDDHSYRLEDFSISSPSSQSPLLDLSGTSGTSGTTNLANSGINSGSGSGGGDIINQNQLITSNQLFQQQLQQQQQPQQQQPPGTPTISPSSSFPLLPIPRDIINSSGASSGIKVKSSTSIPDYVQVSPRRFSGSSTGSGSSVASPQLLSTSNQLNNNINNLNLNSNNNNNNNNNNNNNNNTNNDNNNNNDNNYNVNILLVEDNLVNAKIAMTVLRKHNFRVELSKNGQLAMERIKQSHSSFDLILMDIHMPVMDGITCSKLTRKFETEHGLKHLPIIALTADATTGHKNLCLEAGCNEFMSKPLDYALLISLLKKLVFNKDQ</sequence>
<dbReference type="EC" id="2.7.13.3"/>
<dbReference type="EMBL" id="AAFI02000047">
    <property type="protein sequence ID" value="EAL66048.1"/>
    <property type="molecule type" value="Genomic_DNA"/>
</dbReference>
<dbReference type="EMBL" id="AF362374">
    <property type="protein sequence ID" value="AAK54093.1"/>
    <property type="molecule type" value="Genomic_DNA"/>
</dbReference>
<dbReference type="RefSeq" id="XP_640034.1">
    <property type="nucleotide sequence ID" value="XM_634942.1"/>
</dbReference>
<dbReference type="SMR" id="Q54SK5"/>
<dbReference type="FunCoup" id="Q54SK5">
    <property type="interactions" value="744"/>
</dbReference>
<dbReference type="STRING" id="44689.Q54SK5"/>
<dbReference type="PaxDb" id="44689-DDB0220020"/>
<dbReference type="EnsemblProtists" id="EAL66048">
    <property type="protein sequence ID" value="EAL66048"/>
    <property type="gene ID" value="DDB_G0282377"/>
</dbReference>
<dbReference type="GeneID" id="8623560"/>
<dbReference type="KEGG" id="ddi:DDB_G0282377"/>
<dbReference type="dictyBase" id="DDB_G0282377">
    <property type="gene designation" value="dhkM"/>
</dbReference>
<dbReference type="VEuPathDB" id="AmoebaDB:DDB_G0282377"/>
<dbReference type="eggNOG" id="KOG0519">
    <property type="taxonomic scope" value="Eukaryota"/>
</dbReference>
<dbReference type="HOGENOM" id="CLU_229367_0_0_1"/>
<dbReference type="InParanoid" id="Q54SK5"/>
<dbReference type="OMA" id="CNEFMSK"/>
<dbReference type="PRO" id="PR:Q54SK5"/>
<dbReference type="Proteomes" id="UP000002195">
    <property type="component" value="Chromosome 3"/>
</dbReference>
<dbReference type="GO" id="GO:0016020">
    <property type="term" value="C:membrane"/>
    <property type="evidence" value="ECO:0007669"/>
    <property type="project" value="UniProtKB-SubCell"/>
</dbReference>
<dbReference type="GO" id="GO:0005524">
    <property type="term" value="F:ATP binding"/>
    <property type="evidence" value="ECO:0007669"/>
    <property type="project" value="UniProtKB-KW"/>
</dbReference>
<dbReference type="GO" id="GO:0004673">
    <property type="term" value="F:protein histidine kinase activity"/>
    <property type="evidence" value="ECO:0007669"/>
    <property type="project" value="UniProtKB-EC"/>
</dbReference>
<dbReference type="GO" id="GO:0048102">
    <property type="term" value="P:autophagic cell death"/>
    <property type="evidence" value="ECO:0000315"/>
    <property type="project" value="dictyBase"/>
</dbReference>
<dbReference type="GO" id="GO:0000160">
    <property type="term" value="P:phosphorelay signal transduction system"/>
    <property type="evidence" value="ECO:0007669"/>
    <property type="project" value="UniProtKB-KW"/>
</dbReference>
<dbReference type="CDD" id="cd17546">
    <property type="entry name" value="REC_hyHK_CKI1_RcsC-like"/>
    <property type="match status" value="1"/>
</dbReference>
<dbReference type="FunFam" id="3.40.50.2300:FF:001024">
    <property type="match status" value="1"/>
</dbReference>
<dbReference type="Gene3D" id="3.40.50.2300">
    <property type="match status" value="2"/>
</dbReference>
<dbReference type="Gene3D" id="3.30.565.10">
    <property type="entry name" value="Histidine kinase-like ATPase, C-terminal domain"/>
    <property type="match status" value="2"/>
</dbReference>
<dbReference type="InterPro" id="IPR011006">
    <property type="entry name" value="CheY-like_superfamily"/>
</dbReference>
<dbReference type="InterPro" id="IPR036890">
    <property type="entry name" value="HATPase_C_sf"/>
</dbReference>
<dbReference type="InterPro" id="IPR005467">
    <property type="entry name" value="His_kinase_dom"/>
</dbReference>
<dbReference type="InterPro" id="IPR004358">
    <property type="entry name" value="Sig_transdc_His_kin-like_C"/>
</dbReference>
<dbReference type="InterPro" id="IPR001789">
    <property type="entry name" value="Sig_transdc_resp-reg_receiver"/>
</dbReference>
<dbReference type="PANTHER" id="PTHR45339">
    <property type="entry name" value="HYBRID SIGNAL TRANSDUCTION HISTIDINE KINASE J"/>
    <property type="match status" value="1"/>
</dbReference>
<dbReference type="PANTHER" id="PTHR45339:SF1">
    <property type="entry name" value="HYBRID SIGNAL TRANSDUCTION HISTIDINE KINASE J"/>
    <property type="match status" value="1"/>
</dbReference>
<dbReference type="Pfam" id="PF02518">
    <property type="entry name" value="HATPase_c"/>
    <property type="match status" value="1"/>
</dbReference>
<dbReference type="Pfam" id="PF00072">
    <property type="entry name" value="Response_reg"/>
    <property type="match status" value="1"/>
</dbReference>
<dbReference type="PRINTS" id="PR00344">
    <property type="entry name" value="BCTRLSENSOR"/>
</dbReference>
<dbReference type="SMART" id="SM00387">
    <property type="entry name" value="HATPase_c"/>
    <property type="match status" value="1"/>
</dbReference>
<dbReference type="SMART" id="SM00448">
    <property type="entry name" value="REC"/>
    <property type="match status" value="2"/>
</dbReference>
<dbReference type="SUPFAM" id="SSF55874">
    <property type="entry name" value="ATPase domain of HSP90 chaperone/DNA topoisomerase II/histidine kinase"/>
    <property type="match status" value="2"/>
</dbReference>
<dbReference type="SUPFAM" id="SSF52172">
    <property type="entry name" value="CheY-like"/>
    <property type="match status" value="2"/>
</dbReference>
<dbReference type="PROSITE" id="PS50109">
    <property type="entry name" value="HIS_KIN"/>
    <property type="match status" value="1"/>
</dbReference>
<dbReference type="PROSITE" id="PS50110">
    <property type="entry name" value="RESPONSE_REGULATORY"/>
    <property type="match status" value="2"/>
</dbReference>
<keyword id="KW-0067">ATP-binding</keyword>
<keyword id="KW-0418">Kinase</keyword>
<keyword id="KW-0472">Membrane</keyword>
<keyword id="KW-0547">Nucleotide-binding</keyword>
<keyword id="KW-0597">Phosphoprotein</keyword>
<keyword id="KW-1185">Reference proteome</keyword>
<keyword id="KW-0677">Repeat</keyword>
<keyword id="KW-0807">Transducer</keyword>
<keyword id="KW-0808">Transferase</keyword>
<keyword id="KW-0812">Transmembrane</keyword>
<keyword id="KW-1133">Transmembrane helix</keyword>
<keyword id="KW-0902">Two-component regulatory system</keyword>
<evidence type="ECO:0000250" key="1"/>
<evidence type="ECO:0000255" key="2"/>
<evidence type="ECO:0000255" key="3">
    <source>
        <dbReference type="PROSITE-ProRule" id="PRU00107"/>
    </source>
</evidence>
<evidence type="ECO:0000255" key="4">
    <source>
        <dbReference type="PROSITE-ProRule" id="PRU00169"/>
    </source>
</evidence>
<evidence type="ECO:0000256" key="5">
    <source>
        <dbReference type="SAM" id="MobiDB-lite"/>
    </source>
</evidence>
<evidence type="ECO:0000305" key="6"/>
<organism>
    <name type="scientific">Dictyostelium discoideum</name>
    <name type="common">Social amoeba</name>
    <dbReference type="NCBI Taxonomy" id="44689"/>
    <lineage>
        <taxon>Eukaryota</taxon>
        <taxon>Amoebozoa</taxon>
        <taxon>Evosea</taxon>
        <taxon>Eumycetozoa</taxon>
        <taxon>Dictyostelia</taxon>
        <taxon>Dictyosteliales</taxon>
        <taxon>Dictyosteliaceae</taxon>
        <taxon>Dictyostelium</taxon>
    </lineage>
</organism>